<name>TXFK2_PSACA</name>
<reference key="1">
    <citation type="journal article" date="2004" name="FEBS Lett.">
        <title>Isolation and characterization of Psalmopeotoxin I and II: two novel antimalarial peptides from the venom of the tarantula Psalmopoeus cambridgei.</title>
        <authorList>
            <person name="Choi S.-J."/>
            <person name="Parent R."/>
            <person name="Guillaume C."/>
            <person name="Deregnaucourt C."/>
            <person name="Delarbre C."/>
            <person name="Ojcius D.M."/>
            <person name="Montagne J.-J."/>
            <person name="Celerier M.-L."/>
            <person name="Phelipot A."/>
            <person name="Amiche M."/>
            <person name="Molgo J."/>
            <person name="Camadro J.-M."/>
            <person name="Guette C."/>
        </authorList>
    </citation>
    <scope>NUCLEOTIDE SEQUENCE [MRNA]</scope>
    <scope>PARTIAL PROTEIN SEQUENCE</scope>
    <scope>FUNCTION</scope>
    <scope>MASS SPECTROMETRY</scope>
    <source>
        <tissue>Venom</tissue>
        <tissue>Venom gland</tissue>
    </source>
</reference>
<proteinExistence type="evidence at protein level"/>
<feature type="signal peptide" evidence="2">
    <location>
        <begin position="1"/>
        <end position="20"/>
    </location>
</feature>
<feature type="propeptide" id="PRO_0000256696">
    <location>
        <begin position="21"/>
        <end position="36"/>
    </location>
</feature>
<feature type="peptide" id="PRO_0000256697" description="U2-theraphotoxin-Pc1a">
    <location>
        <begin position="38"/>
        <end position="65"/>
    </location>
</feature>
<feature type="disulfide bond" evidence="1">
    <location>
        <begin position="39"/>
        <end position="56"/>
    </location>
</feature>
<feature type="disulfide bond" evidence="1">
    <location>
        <begin position="46"/>
        <end position="59"/>
    </location>
</feature>
<feature type="disulfide bond" evidence="1">
    <location>
        <begin position="55"/>
        <end position="64"/>
    </location>
</feature>
<comment type="function">
    <text evidence="3">Possesses strong antiplasmodial activity against the intra-erythrocyte stage of P.falciparum in vitro. IC(50) for inhibiting P.falciparum growth is 1.15 uM. Specifically interacts with infected erythrocytes. Does not lyse erythrocytes, is not cytotoxic to nucleated mammalian cells, and does not inhibit neuromuscular function. Has neither antibacterial nor antifungal activity.</text>
</comment>
<comment type="subcellular location">
    <subcellularLocation>
        <location>Secreted</location>
    </subcellularLocation>
</comment>
<comment type="tissue specificity">
    <text>Expressed by the venom gland.</text>
</comment>
<comment type="domain">
    <text evidence="1">The presence of a 'disulfide through disulfide knot' structurally defines this protein as a knottin.</text>
</comment>
<comment type="mass spectrometry" mass="2948.3" method="MALDI" evidence="3"/>
<comment type="miscellaneous">
    <text>Usually endopeptidases cleave the propeptide at the C-terminus of the basic doublet (Arg-37-38-Arg), but here, it seems that the endopeptidase cleaves the precursor within the doublet.</text>
</comment>
<comment type="similarity">
    <text>Belongs to the neurotoxin 36 family. 02 subfamily.</text>
</comment>
<protein>
    <recommendedName>
        <fullName>U2-theraphotoxin-Pc1a</fullName>
        <shortName>U2-TRTX-Pc1a</shortName>
    </recommendedName>
    <alternativeName>
        <fullName>Psalmopeotoxin II</fullName>
    </alternativeName>
    <alternativeName>
        <fullName>Psalmopeotoxin-2</fullName>
    </alternativeName>
    <alternativeName>
        <fullName>Psalmopoeus cambridgei Falciparum killer 2</fullName>
        <shortName>PcFK2</shortName>
    </alternativeName>
</protein>
<keyword id="KW-0165">Cleavage on pair of basic residues</keyword>
<keyword id="KW-0903">Direct protein sequencing</keyword>
<keyword id="KW-1015">Disulfide bond</keyword>
<keyword id="KW-0960">Knottin</keyword>
<keyword id="KW-0964">Secreted</keyword>
<keyword id="KW-0732">Signal</keyword>
<keyword id="KW-0800">Toxin</keyword>
<dbReference type="SMR" id="P0C202"/>
<dbReference type="ArachnoServer" id="AS000319">
    <property type="toxin name" value="U2-theraphotoxin-Pc1a"/>
</dbReference>
<dbReference type="GO" id="GO:0005576">
    <property type="term" value="C:extracellular region"/>
    <property type="evidence" value="ECO:0007669"/>
    <property type="project" value="UniProtKB-SubCell"/>
</dbReference>
<dbReference type="GO" id="GO:0090729">
    <property type="term" value="F:toxin activity"/>
    <property type="evidence" value="ECO:0007669"/>
    <property type="project" value="UniProtKB-KW"/>
</dbReference>
<dbReference type="SUPFAM" id="SSF57059">
    <property type="entry name" value="omega toxin-like"/>
    <property type="match status" value="1"/>
</dbReference>
<organism>
    <name type="scientific">Psalmopoeus cambridgei</name>
    <name type="common">Trinidad chevron tarantula</name>
    <dbReference type="NCBI Taxonomy" id="179874"/>
    <lineage>
        <taxon>Eukaryota</taxon>
        <taxon>Metazoa</taxon>
        <taxon>Ecdysozoa</taxon>
        <taxon>Arthropoda</taxon>
        <taxon>Chelicerata</taxon>
        <taxon>Arachnida</taxon>
        <taxon>Araneae</taxon>
        <taxon>Mygalomorphae</taxon>
        <taxon>Theraphosidae</taxon>
        <taxon>Psalmopoeus</taxon>
    </lineage>
</organism>
<accession>P0C202</accession>
<sequence length="65" mass="6994">MGFKLVLFIAVLTLVGSSNAEISAKMDSRDSPMIQERRCLPAGKTCVRGPMRVPCCGSCSQNKCT</sequence>
<evidence type="ECO:0000250" key="1"/>
<evidence type="ECO:0000255" key="2"/>
<evidence type="ECO:0000269" key="3">
    <source>
    </source>
</evidence>